<protein>
    <recommendedName>
        <fullName>Uncharacterized protein MJ0311</fullName>
    </recommendedName>
</protein>
<feature type="chain" id="PRO_0000106787" description="Uncharacterized protein MJ0311">
    <location>
        <begin position="1"/>
        <end position="110"/>
    </location>
</feature>
<reference key="1">
    <citation type="journal article" date="1996" name="Science">
        <title>Complete genome sequence of the methanogenic archaeon, Methanococcus jannaschii.</title>
        <authorList>
            <person name="Bult C.J."/>
            <person name="White O."/>
            <person name="Olsen G.J."/>
            <person name="Zhou L."/>
            <person name="Fleischmann R.D."/>
            <person name="Sutton G.G."/>
            <person name="Blake J.A."/>
            <person name="FitzGerald L.M."/>
            <person name="Clayton R.A."/>
            <person name="Gocayne J.D."/>
            <person name="Kerlavage A.R."/>
            <person name="Dougherty B.A."/>
            <person name="Tomb J.-F."/>
            <person name="Adams M.D."/>
            <person name="Reich C.I."/>
            <person name="Overbeek R."/>
            <person name="Kirkness E.F."/>
            <person name="Weinstock K.G."/>
            <person name="Merrick J.M."/>
            <person name="Glodek A."/>
            <person name="Scott J.L."/>
            <person name="Geoghagen N.S.M."/>
            <person name="Weidman J.F."/>
            <person name="Fuhrmann J.L."/>
            <person name="Nguyen D."/>
            <person name="Utterback T.R."/>
            <person name="Kelley J.M."/>
            <person name="Peterson J.D."/>
            <person name="Sadow P.W."/>
            <person name="Hanna M.C."/>
            <person name="Cotton M.D."/>
            <person name="Roberts K.M."/>
            <person name="Hurst M.A."/>
            <person name="Kaine B.P."/>
            <person name="Borodovsky M."/>
            <person name="Klenk H.-P."/>
            <person name="Fraser C.M."/>
            <person name="Smith H.O."/>
            <person name="Woese C.R."/>
            <person name="Venter J.C."/>
        </authorList>
    </citation>
    <scope>NUCLEOTIDE SEQUENCE [LARGE SCALE GENOMIC DNA]</scope>
    <source>
        <strain>ATCC 43067 / DSM 2661 / JAL-1 / JCM 10045 / NBRC 100440</strain>
    </source>
</reference>
<sequence>MIQKEILEELKDLDYIHGVLLIKNDGLVEYSSLSEDSNMESLGARLSIILNSISEVIKDIYNEKTECVFIKVKDDGIILIPKDNEILTILFKANNDILHKIIPIIQEIIK</sequence>
<name>Y311_METJA</name>
<organism>
    <name type="scientific">Methanocaldococcus jannaschii (strain ATCC 43067 / DSM 2661 / JAL-1 / JCM 10045 / NBRC 100440)</name>
    <name type="common">Methanococcus jannaschii</name>
    <dbReference type="NCBI Taxonomy" id="243232"/>
    <lineage>
        <taxon>Archaea</taxon>
        <taxon>Methanobacteriati</taxon>
        <taxon>Methanobacteriota</taxon>
        <taxon>Methanomada group</taxon>
        <taxon>Methanococci</taxon>
        <taxon>Methanococcales</taxon>
        <taxon>Methanocaldococcaceae</taxon>
        <taxon>Methanocaldococcus</taxon>
    </lineage>
</organism>
<gene>
    <name type="ordered locus">MJ0311</name>
</gene>
<proteinExistence type="predicted"/>
<keyword id="KW-1185">Reference proteome</keyword>
<dbReference type="EMBL" id="L77117">
    <property type="protein sequence ID" value="AAB98299.1"/>
    <property type="molecule type" value="Genomic_DNA"/>
</dbReference>
<dbReference type="PIR" id="H64338">
    <property type="entry name" value="H64338"/>
</dbReference>
<dbReference type="RefSeq" id="WP_010869809.1">
    <property type="nucleotide sequence ID" value="NC_000909.1"/>
</dbReference>
<dbReference type="SMR" id="Q57759"/>
<dbReference type="STRING" id="243232.MJ_0311"/>
<dbReference type="PaxDb" id="243232-MJ_0311"/>
<dbReference type="EnsemblBacteria" id="AAB98299">
    <property type="protein sequence ID" value="AAB98299"/>
    <property type="gene ID" value="MJ_0311"/>
</dbReference>
<dbReference type="GeneID" id="1451166"/>
<dbReference type="KEGG" id="mja:MJ_0311"/>
<dbReference type="eggNOG" id="arCOG02603">
    <property type="taxonomic scope" value="Archaea"/>
</dbReference>
<dbReference type="HOGENOM" id="CLU_2165281_0_0_2"/>
<dbReference type="InParanoid" id="Q57759"/>
<dbReference type="OrthoDB" id="377037at2157"/>
<dbReference type="Proteomes" id="UP000000805">
    <property type="component" value="Chromosome"/>
</dbReference>
<dbReference type="Gene3D" id="3.30.450.30">
    <property type="entry name" value="Dynein light chain 2a, cytoplasmic"/>
    <property type="match status" value="1"/>
</dbReference>
<dbReference type="InterPro" id="IPR004942">
    <property type="entry name" value="Roadblock/LAMTOR2_dom"/>
</dbReference>
<dbReference type="Pfam" id="PF03259">
    <property type="entry name" value="Robl_LC7"/>
    <property type="match status" value="1"/>
</dbReference>
<dbReference type="SMART" id="SM00960">
    <property type="entry name" value="Robl_LC7"/>
    <property type="match status" value="1"/>
</dbReference>
<dbReference type="SUPFAM" id="SSF103196">
    <property type="entry name" value="Roadblock/LC7 domain"/>
    <property type="match status" value="1"/>
</dbReference>
<accession>Q57759</accession>